<feature type="initiator methionine" description="Removed" evidence="1">
    <location>
        <position position="1"/>
    </location>
</feature>
<feature type="chain" id="PRO_0000275753" description="Photosystem II reaction center protein H">
    <location>
        <begin position="2"/>
        <end position="73"/>
    </location>
</feature>
<feature type="transmembrane region" description="Helical" evidence="2">
    <location>
        <begin position="41"/>
        <end position="61"/>
    </location>
</feature>
<feature type="modified residue" description="Phosphothreonine" evidence="2">
    <location>
        <position position="3"/>
    </location>
</feature>
<feature type="modified residue" description="Phosphothreonine" evidence="2">
    <location>
        <position position="5"/>
    </location>
</feature>
<keyword id="KW-0150">Chloroplast</keyword>
<keyword id="KW-0472">Membrane</keyword>
<keyword id="KW-0597">Phosphoprotein</keyword>
<keyword id="KW-0602">Photosynthesis</keyword>
<keyword id="KW-0604">Photosystem II</keyword>
<keyword id="KW-0934">Plastid</keyword>
<keyword id="KW-0793">Thylakoid</keyword>
<keyword id="KW-0812">Transmembrane</keyword>
<keyword id="KW-1133">Transmembrane helix</keyword>
<proteinExistence type="inferred from homology"/>
<reference key="1">
    <citation type="journal article" date="2005" name="DNA Res.">
        <title>Complete nucleotide sequence of the chloroplast genome from the Tasmanian blue gum, Eucalyptus globulus (Myrtaceae).</title>
        <authorList>
            <person name="Steane D.A."/>
        </authorList>
    </citation>
    <scope>NUCLEOTIDE SEQUENCE [LARGE SCALE GENOMIC DNA]</scope>
</reference>
<name>PSBH_EUCGG</name>
<gene>
    <name evidence="2" type="primary">psbH</name>
</gene>
<geneLocation type="chloroplast"/>
<organism>
    <name type="scientific">Eucalyptus globulus subsp. globulus</name>
    <name type="common">Tasmanian blue gum</name>
    <dbReference type="NCBI Taxonomy" id="71271"/>
    <lineage>
        <taxon>Eukaryota</taxon>
        <taxon>Viridiplantae</taxon>
        <taxon>Streptophyta</taxon>
        <taxon>Embryophyta</taxon>
        <taxon>Tracheophyta</taxon>
        <taxon>Spermatophyta</taxon>
        <taxon>Magnoliopsida</taxon>
        <taxon>eudicotyledons</taxon>
        <taxon>Gunneridae</taxon>
        <taxon>Pentapetalae</taxon>
        <taxon>rosids</taxon>
        <taxon>malvids</taxon>
        <taxon>Myrtales</taxon>
        <taxon>Myrtaceae</taxon>
        <taxon>Myrtoideae</taxon>
        <taxon>Eucalypteae</taxon>
        <taxon>Eucalyptus</taxon>
    </lineage>
</organism>
<dbReference type="EMBL" id="AY780259">
    <property type="protein sequence ID" value="AAX21056.1"/>
    <property type="molecule type" value="Genomic_DNA"/>
</dbReference>
<dbReference type="RefSeq" id="YP_636328.1">
    <property type="nucleotide sequence ID" value="NC_008115.1"/>
</dbReference>
<dbReference type="SMR" id="Q49KW9"/>
<dbReference type="GeneID" id="4108412"/>
<dbReference type="GO" id="GO:0009535">
    <property type="term" value="C:chloroplast thylakoid membrane"/>
    <property type="evidence" value="ECO:0007669"/>
    <property type="project" value="UniProtKB-SubCell"/>
</dbReference>
<dbReference type="GO" id="GO:0009523">
    <property type="term" value="C:photosystem II"/>
    <property type="evidence" value="ECO:0007669"/>
    <property type="project" value="UniProtKB-KW"/>
</dbReference>
<dbReference type="GO" id="GO:0042301">
    <property type="term" value="F:phosphate ion binding"/>
    <property type="evidence" value="ECO:0007669"/>
    <property type="project" value="InterPro"/>
</dbReference>
<dbReference type="GO" id="GO:0015979">
    <property type="term" value="P:photosynthesis"/>
    <property type="evidence" value="ECO:0007669"/>
    <property type="project" value="UniProtKB-UniRule"/>
</dbReference>
<dbReference type="GO" id="GO:0050821">
    <property type="term" value="P:protein stabilization"/>
    <property type="evidence" value="ECO:0007669"/>
    <property type="project" value="InterPro"/>
</dbReference>
<dbReference type="FunFam" id="1.20.5.880:FF:000001">
    <property type="entry name" value="Photosystem II reaction center protein H"/>
    <property type="match status" value="1"/>
</dbReference>
<dbReference type="Gene3D" id="1.20.5.880">
    <property type="entry name" value="Photosystem II reaction center protein H"/>
    <property type="match status" value="1"/>
</dbReference>
<dbReference type="HAMAP" id="MF_00752">
    <property type="entry name" value="PSII_PsbH"/>
    <property type="match status" value="1"/>
</dbReference>
<dbReference type="InterPro" id="IPR001056">
    <property type="entry name" value="PSII_PsbH"/>
</dbReference>
<dbReference type="InterPro" id="IPR036863">
    <property type="entry name" value="PSII_PsbH_sf"/>
</dbReference>
<dbReference type="NCBIfam" id="NF002728">
    <property type="entry name" value="PRK02624.1"/>
    <property type="match status" value="1"/>
</dbReference>
<dbReference type="PANTHER" id="PTHR34469">
    <property type="entry name" value="PHOTOSYSTEM II REACTION CENTER PROTEIN H"/>
    <property type="match status" value="1"/>
</dbReference>
<dbReference type="PANTHER" id="PTHR34469:SF4">
    <property type="entry name" value="PHOTOSYSTEM II REACTION CENTER PROTEIN H"/>
    <property type="match status" value="1"/>
</dbReference>
<dbReference type="Pfam" id="PF00737">
    <property type="entry name" value="PsbH"/>
    <property type="match status" value="1"/>
</dbReference>
<dbReference type="SUPFAM" id="SSF161025">
    <property type="entry name" value="Photosystem II 10 kDa phosphoprotein PsbH"/>
    <property type="match status" value="1"/>
</dbReference>
<sequence length="73" mass="7744">MATQTVEGSSRSGPRRTIVGDLLKPLNSEYGKVAPGWGTTPLMGVAMALFAVFLSIILEIYNSSVLLDGISMN</sequence>
<comment type="function">
    <text evidence="2">One of the components of the core complex of photosystem II (PSII), required for its stability and/or assembly. PSII is a light-driven water:plastoquinone oxidoreductase that uses light energy to abstract electrons from H(2)O, generating O(2) and a proton gradient subsequently used for ATP formation. It consists of a core antenna complex that captures photons, and an electron transfer chain that converts photonic excitation into a charge separation.</text>
</comment>
<comment type="subunit">
    <text evidence="2">PSII is composed of 1 copy each of membrane proteins PsbA, PsbB, PsbC, PsbD, PsbE, PsbF, PsbH, PsbI, PsbJ, PsbK, PsbL, PsbM, PsbT, PsbX, PsbY, PsbZ, Psb30/Ycf12, at least 3 peripheral proteins of the oxygen-evolving complex and a large number of cofactors. It forms dimeric complexes.</text>
</comment>
<comment type="subcellular location">
    <subcellularLocation>
        <location evidence="2">Plastid</location>
        <location evidence="2">Chloroplast thylakoid membrane</location>
        <topology evidence="2">Single-pass membrane protein</topology>
    </subcellularLocation>
</comment>
<comment type="PTM">
    <text evidence="2">Phosphorylation is a light-dependent reaction catalyzed by a membrane-bound kinase; phosphorylation occurs on Thr residue(s) in the N-terminus of the protein.</text>
</comment>
<comment type="similarity">
    <text evidence="2">Belongs to the PsbH family.</text>
</comment>
<accession>Q49KW9</accession>
<evidence type="ECO:0000250" key="1">
    <source>
        <dbReference type="UniProtKB" id="P56780"/>
    </source>
</evidence>
<evidence type="ECO:0000255" key="2">
    <source>
        <dbReference type="HAMAP-Rule" id="MF_00752"/>
    </source>
</evidence>
<protein>
    <recommendedName>
        <fullName evidence="2">Photosystem II reaction center protein H</fullName>
        <shortName evidence="2">PSII-H</shortName>
    </recommendedName>
    <alternativeName>
        <fullName evidence="2">Photosystem II 10 kDa phosphoprotein</fullName>
    </alternativeName>
</protein>